<accession>Q7N767</accession>
<name>LIPA_PHOLL</name>
<comment type="function">
    <text evidence="1">Catalyzes the radical-mediated insertion of two sulfur atoms into the C-6 and C-8 positions of the octanoyl moiety bound to the lipoyl domains of lipoate-dependent enzymes, thereby converting the octanoylated domains into lipoylated derivatives.</text>
</comment>
<comment type="catalytic activity">
    <reaction evidence="1">
        <text>[[Fe-S] cluster scaffold protein carrying a second [4Fe-4S](2+) cluster] + N(6)-octanoyl-L-lysyl-[protein] + 2 oxidized [2Fe-2S]-[ferredoxin] + 2 S-adenosyl-L-methionine + 4 H(+) = [[Fe-S] cluster scaffold protein] + N(6)-[(R)-dihydrolipoyl]-L-lysyl-[protein] + 4 Fe(3+) + 2 hydrogen sulfide + 2 5'-deoxyadenosine + 2 L-methionine + 2 reduced [2Fe-2S]-[ferredoxin]</text>
        <dbReference type="Rhea" id="RHEA:16585"/>
        <dbReference type="Rhea" id="RHEA-COMP:9928"/>
        <dbReference type="Rhea" id="RHEA-COMP:10000"/>
        <dbReference type="Rhea" id="RHEA-COMP:10001"/>
        <dbReference type="Rhea" id="RHEA-COMP:10475"/>
        <dbReference type="Rhea" id="RHEA-COMP:14568"/>
        <dbReference type="Rhea" id="RHEA-COMP:14569"/>
        <dbReference type="ChEBI" id="CHEBI:15378"/>
        <dbReference type="ChEBI" id="CHEBI:17319"/>
        <dbReference type="ChEBI" id="CHEBI:29034"/>
        <dbReference type="ChEBI" id="CHEBI:29919"/>
        <dbReference type="ChEBI" id="CHEBI:33722"/>
        <dbReference type="ChEBI" id="CHEBI:33737"/>
        <dbReference type="ChEBI" id="CHEBI:33738"/>
        <dbReference type="ChEBI" id="CHEBI:57844"/>
        <dbReference type="ChEBI" id="CHEBI:59789"/>
        <dbReference type="ChEBI" id="CHEBI:78809"/>
        <dbReference type="ChEBI" id="CHEBI:83100"/>
        <dbReference type="EC" id="2.8.1.8"/>
    </reaction>
</comment>
<comment type="cofactor">
    <cofactor evidence="1">
        <name>[4Fe-4S] cluster</name>
        <dbReference type="ChEBI" id="CHEBI:49883"/>
    </cofactor>
    <text evidence="1">Binds 2 [4Fe-4S] clusters per subunit. One cluster is coordinated with 3 cysteines and an exchangeable S-adenosyl-L-methionine.</text>
</comment>
<comment type="pathway">
    <text evidence="1">Protein modification; protein lipoylation via endogenous pathway; protein N(6)-(lipoyl)lysine from octanoyl-[acyl-carrier-protein]: step 2/2.</text>
</comment>
<comment type="subcellular location">
    <subcellularLocation>
        <location evidence="1">Cytoplasm</location>
    </subcellularLocation>
</comment>
<comment type="similarity">
    <text evidence="1">Belongs to the radical SAM superfamily. Lipoyl synthase family.</text>
</comment>
<reference key="1">
    <citation type="journal article" date="2003" name="Nat. Biotechnol.">
        <title>The genome sequence of the entomopathogenic bacterium Photorhabdus luminescens.</title>
        <authorList>
            <person name="Duchaud E."/>
            <person name="Rusniok C."/>
            <person name="Frangeul L."/>
            <person name="Buchrieser C."/>
            <person name="Givaudan A."/>
            <person name="Taourit S."/>
            <person name="Bocs S."/>
            <person name="Boursaux-Eude C."/>
            <person name="Chandler M."/>
            <person name="Charles J.-F."/>
            <person name="Dassa E."/>
            <person name="Derose R."/>
            <person name="Derzelle S."/>
            <person name="Freyssinet G."/>
            <person name="Gaudriault S."/>
            <person name="Medigue C."/>
            <person name="Lanois A."/>
            <person name="Powell K."/>
            <person name="Siguier P."/>
            <person name="Vincent R."/>
            <person name="Wingate V."/>
            <person name="Zouine M."/>
            <person name="Glaser P."/>
            <person name="Boemare N."/>
            <person name="Danchin A."/>
            <person name="Kunst F."/>
        </authorList>
    </citation>
    <scope>NUCLEOTIDE SEQUENCE [LARGE SCALE GENOMIC DNA]</scope>
    <source>
        <strain>DSM 15139 / CIP 105565 / TT01</strain>
    </source>
</reference>
<feature type="chain" id="PRO_0000102334" description="Lipoyl synthase">
    <location>
        <begin position="1"/>
        <end position="321"/>
    </location>
</feature>
<feature type="domain" description="Radical SAM core" evidence="2">
    <location>
        <begin position="80"/>
        <end position="297"/>
    </location>
</feature>
<feature type="binding site" evidence="1">
    <location>
        <position position="68"/>
    </location>
    <ligand>
        <name>[4Fe-4S] cluster</name>
        <dbReference type="ChEBI" id="CHEBI:49883"/>
        <label>1</label>
    </ligand>
</feature>
<feature type="binding site" evidence="1">
    <location>
        <position position="73"/>
    </location>
    <ligand>
        <name>[4Fe-4S] cluster</name>
        <dbReference type="ChEBI" id="CHEBI:49883"/>
        <label>1</label>
    </ligand>
</feature>
<feature type="binding site" evidence="1">
    <location>
        <position position="79"/>
    </location>
    <ligand>
        <name>[4Fe-4S] cluster</name>
        <dbReference type="ChEBI" id="CHEBI:49883"/>
        <label>1</label>
    </ligand>
</feature>
<feature type="binding site" evidence="1">
    <location>
        <position position="94"/>
    </location>
    <ligand>
        <name>[4Fe-4S] cluster</name>
        <dbReference type="ChEBI" id="CHEBI:49883"/>
        <label>2</label>
        <note>4Fe-4S-S-AdoMet</note>
    </ligand>
</feature>
<feature type="binding site" evidence="1">
    <location>
        <position position="98"/>
    </location>
    <ligand>
        <name>[4Fe-4S] cluster</name>
        <dbReference type="ChEBI" id="CHEBI:49883"/>
        <label>2</label>
        <note>4Fe-4S-S-AdoMet</note>
    </ligand>
</feature>
<feature type="binding site" evidence="1">
    <location>
        <position position="101"/>
    </location>
    <ligand>
        <name>[4Fe-4S] cluster</name>
        <dbReference type="ChEBI" id="CHEBI:49883"/>
        <label>2</label>
        <note>4Fe-4S-S-AdoMet</note>
    </ligand>
</feature>
<feature type="binding site" evidence="1">
    <location>
        <position position="308"/>
    </location>
    <ligand>
        <name>[4Fe-4S] cluster</name>
        <dbReference type="ChEBI" id="CHEBI:49883"/>
        <label>1</label>
    </ligand>
</feature>
<evidence type="ECO:0000255" key="1">
    <source>
        <dbReference type="HAMAP-Rule" id="MF_00206"/>
    </source>
</evidence>
<evidence type="ECO:0000255" key="2">
    <source>
        <dbReference type="PROSITE-ProRule" id="PRU01266"/>
    </source>
</evidence>
<proteinExistence type="inferred from homology"/>
<gene>
    <name evidence="1" type="primary">lipA</name>
    <name type="ordered locus">plu1291</name>
</gene>
<sequence length="321" mass="36298">MSKPIQMERGVKYRDADKMALIPVKTVMTERTEILRKPEWMKIKLPADSSRIQGIKSAMRKNGLHSVCEEASCPNLAECFNHGTATFMILGAICTRRCPFCDVAHGRPMAPDTNEPVKLAQTIKDMALRYVVITSVDRDDLRDGGAQHFADCISAIREKNPSIKIETLVPDFRGRMDRALEILTATPPDVFNHNLENVPRVYRQVRPGANYEWSLKLLEKFKEAHPDIPTKSGLMVGLGETNEEILDVMRDLRRHGVTMLTLGQYLQPSRHHLPVQRYVSPQEFDEMKEEALAMGFTHAACGPFVRSSYHADLQAKGEEVK</sequence>
<keyword id="KW-0004">4Fe-4S</keyword>
<keyword id="KW-0963">Cytoplasm</keyword>
<keyword id="KW-0408">Iron</keyword>
<keyword id="KW-0411">Iron-sulfur</keyword>
<keyword id="KW-0479">Metal-binding</keyword>
<keyword id="KW-1185">Reference proteome</keyword>
<keyword id="KW-0949">S-adenosyl-L-methionine</keyword>
<keyword id="KW-0808">Transferase</keyword>
<dbReference type="EC" id="2.8.1.8" evidence="1"/>
<dbReference type="EMBL" id="BX571863">
    <property type="protein sequence ID" value="CAE13585.1"/>
    <property type="molecule type" value="Genomic_DNA"/>
</dbReference>
<dbReference type="RefSeq" id="WP_011145615.1">
    <property type="nucleotide sequence ID" value="NC_005126.1"/>
</dbReference>
<dbReference type="SMR" id="Q7N767"/>
<dbReference type="STRING" id="243265.plu1291"/>
<dbReference type="GeneID" id="88805973"/>
<dbReference type="KEGG" id="plu:plu1291"/>
<dbReference type="eggNOG" id="COG0320">
    <property type="taxonomic scope" value="Bacteria"/>
</dbReference>
<dbReference type="HOGENOM" id="CLU_033144_2_1_6"/>
<dbReference type="OrthoDB" id="9787898at2"/>
<dbReference type="UniPathway" id="UPA00538">
    <property type="reaction ID" value="UER00593"/>
</dbReference>
<dbReference type="Proteomes" id="UP000002514">
    <property type="component" value="Chromosome"/>
</dbReference>
<dbReference type="GO" id="GO:0005737">
    <property type="term" value="C:cytoplasm"/>
    <property type="evidence" value="ECO:0007669"/>
    <property type="project" value="UniProtKB-SubCell"/>
</dbReference>
<dbReference type="GO" id="GO:0051539">
    <property type="term" value="F:4 iron, 4 sulfur cluster binding"/>
    <property type="evidence" value="ECO:0007669"/>
    <property type="project" value="UniProtKB-UniRule"/>
</dbReference>
<dbReference type="GO" id="GO:0016992">
    <property type="term" value="F:lipoate synthase activity"/>
    <property type="evidence" value="ECO:0007669"/>
    <property type="project" value="UniProtKB-UniRule"/>
</dbReference>
<dbReference type="GO" id="GO:0046872">
    <property type="term" value="F:metal ion binding"/>
    <property type="evidence" value="ECO:0007669"/>
    <property type="project" value="UniProtKB-KW"/>
</dbReference>
<dbReference type="CDD" id="cd01335">
    <property type="entry name" value="Radical_SAM"/>
    <property type="match status" value="1"/>
</dbReference>
<dbReference type="FunFam" id="3.20.20.70:FF:000023">
    <property type="entry name" value="Lipoyl synthase"/>
    <property type="match status" value="1"/>
</dbReference>
<dbReference type="Gene3D" id="3.20.20.70">
    <property type="entry name" value="Aldolase class I"/>
    <property type="match status" value="1"/>
</dbReference>
<dbReference type="HAMAP" id="MF_00206">
    <property type="entry name" value="Lipoyl_synth"/>
    <property type="match status" value="1"/>
</dbReference>
<dbReference type="InterPro" id="IPR013785">
    <property type="entry name" value="Aldolase_TIM"/>
</dbReference>
<dbReference type="InterPro" id="IPR006638">
    <property type="entry name" value="Elp3/MiaA/NifB-like_rSAM"/>
</dbReference>
<dbReference type="InterPro" id="IPR031691">
    <property type="entry name" value="LIAS_N"/>
</dbReference>
<dbReference type="InterPro" id="IPR003698">
    <property type="entry name" value="Lipoyl_synth"/>
</dbReference>
<dbReference type="InterPro" id="IPR007197">
    <property type="entry name" value="rSAM"/>
</dbReference>
<dbReference type="NCBIfam" id="TIGR00510">
    <property type="entry name" value="lipA"/>
    <property type="match status" value="1"/>
</dbReference>
<dbReference type="NCBIfam" id="NF004019">
    <property type="entry name" value="PRK05481.1"/>
    <property type="match status" value="1"/>
</dbReference>
<dbReference type="NCBIfam" id="NF009544">
    <property type="entry name" value="PRK12928.1"/>
    <property type="match status" value="1"/>
</dbReference>
<dbReference type="PANTHER" id="PTHR10949">
    <property type="entry name" value="LIPOYL SYNTHASE"/>
    <property type="match status" value="1"/>
</dbReference>
<dbReference type="PANTHER" id="PTHR10949:SF0">
    <property type="entry name" value="LIPOYL SYNTHASE, MITOCHONDRIAL"/>
    <property type="match status" value="1"/>
</dbReference>
<dbReference type="Pfam" id="PF16881">
    <property type="entry name" value="LIAS_N"/>
    <property type="match status" value="1"/>
</dbReference>
<dbReference type="Pfam" id="PF04055">
    <property type="entry name" value="Radical_SAM"/>
    <property type="match status" value="1"/>
</dbReference>
<dbReference type="PIRSF" id="PIRSF005963">
    <property type="entry name" value="Lipoyl_synth"/>
    <property type="match status" value="1"/>
</dbReference>
<dbReference type="SFLD" id="SFLDF00271">
    <property type="entry name" value="lipoyl_synthase"/>
    <property type="match status" value="1"/>
</dbReference>
<dbReference type="SFLD" id="SFLDS00029">
    <property type="entry name" value="Radical_SAM"/>
    <property type="match status" value="1"/>
</dbReference>
<dbReference type="SMART" id="SM00729">
    <property type="entry name" value="Elp3"/>
    <property type="match status" value="1"/>
</dbReference>
<dbReference type="SUPFAM" id="SSF102114">
    <property type="entry name" value="Radical SAM enzymes"/>
    <property type="match status" value="1"/>
</dbReference>
<dbReference type="PROSITE" id="PS51918">
    <property type="entry name" value="RADICAL_SAM"/>
    <property type="match status" value="1"/>
</dbReference>
<protein>
    <recommendedName>
        <fullName evidence="1">Lipoyl synthase</fullName>
        <ecNumber evidence="1">2.8.1.8</ecNumber>
    </recommendedName>
    <alternativeName>
        <fullName evidence="1">Lip-syn</fullName>
        <shortName evidence="1">LS</shortName>
    </alternativeName>
    <alternativeName>
        <fullName evidence="1">Lipoate synthase</fullName>
    </alternativeName>
    <alternativeName>
        <fullName evidence="1">Lipoic acid synthase</fullName>
    </alternativeName>
    <alternativeName>
        <fullName evidence="1">Sulfur insertion protein LipA</fullName>
    </alternativeName>
</protein>
<organism>
    <name type="scientific">Photorhabdus laumondii subsp. laumondii (strain DSM 15139 / CIP 105565 / TT01)</name>
    <name type="common">Photorhabdus luminescens subsp. laumondii</name>
    <dbReference type="NCBI Taxonomy" id="243265"/>
    <lineage>
        <taxon>Bacteria</taxon>
        <taxon>Pseudomonadati</taxon>
        <taxon>Pseudomonadota</taxon>
        <taxon>Gammaproteobacteria</taxon>
        <taxon>Enterobacterales</taxon>
        <taxon>Morganellaceae</taxon>
        <taxon>Photorhabdus</taxon>
    </lineage>
</organism>